<accession>P05148</accession>
<reference key="1">
    <citation type="journal article" date="1984" name="J. Bacteriol.">
        <title>Histidine operon control region of Klebsiella pneumoniae: analysis with an Escherichia coli promoter-probe plasmid vector.</title>
        <authorList>
            <person name="Rodriguez R.L."/>
            <person name="West R.W. Jr."/>
        </authorList>
    </citation>
    <scope>NUCLEOTIDE SEQUENCE [GENOMIC DNA]</scope>
</reference>
<gene>
    <name type="primary">hisG</name>
</gene>
<feature type="chain" id="PRO_0000151853" description="ATP phosphoribosyltransferase">
    <location>
        <begin position="1"/>
        <end position="100" status="greater than"/>
    </location>
</feature>
<feature type="non-terminal residue">
    <location>
        <position position="100"/>
    </location>
</feature>
<protein>
    <recommendedName>
        <fullName>ATP phosphoribosyltransferase</fullName>
        <shortName>ATP-PRT</shortName>
        <shortName>ATP-PRTase</shortName>
        <ecNumber>2.4.2.17</ecNumber>
    </recommendedName>
</protein>
<comment type="function">
    <text evidence="1">Catalyzes the condensation of ATP and 5-phosphoribose 1-diphosphate to form N'-(5'-phosphoribosyl)-ATP (PR-ATP). Has a crucial role in the pathway because the rate of histidine biosynthesis seems to be controlled primarily by regulation of HisG enzymatic activity (By similarity).</text>
</comment>
<comment type="catalytic activity">
    <reaction>
        <text>1-(5-phospho-beta-D-ribosyl)-ATP + diphosphate = 5-phospho-alpha-D-ribose 1-diphosphate + ATP</text>
        <dbReference type="Rhea" id="RHEA:18473"/>
        <dbReference type="ChEBI" id="CHEBI:30616"/>
        <dbReference type="ChEBI" id="CHEBI:33019"/>
        <dbReference type="ChEBI" id="CHEBI:58017"/>
        <dbReference type="ChEBI" id="CHEBI:73183"/>
        <dbReference type="EC" id="2.4.2.17"/>
    </reaction>
</comment>
<comment type="cofactor">
    <cofactor evidence="1">
        <name>Mg(2+)</name>
        <dbReference type="ChEBI" id="CHEBI:18420"/>
    </cofactor>
</comment>
<comment type="activity regulation">
    <text evidence="1">Feedback inhibited by histidine.</text>
</comment>
<comment type="pathway">
    <text>Amino-acid biosynthesis; L-histidine biosynthesis; L-histidine from 5-phospho-alpha-D-ribose 1-diphosphate: step 1/9.</text>
</comment>
<comment type="subunit">
    <text evidence="1">Equilibrium between an active dimeric form, an inactive hexameric form and higher aggregates. Interconversion between the various forms is largely reversible and is influenced by the natural substrates and inhibitors of the enzyme (By similarity).</text>
</comment>
<comment type="subcellular location">
    <subcellularLocation>
        <location evidence="1">Cytoplasm</location>
    </subcellularLocation>
</comment>
<comment type="similarity">
    <text evidence="2">Belongs to the ATP phosphoribosyltransferase family. Long subfamily.</text>
</comment>
<sequence length="100" mass="11408">MLDNSRLRIAIQKSGRLSEDSRELLSRCGIKVNLHTQRLIALAENMPIDILRVRDDDIPGLIMNGVVDLGIIGENVLEEELLNRRAQGEDPRHFNPRRLD</sequence>
<organism>
    <name type="scientific">Klebsiella pneumoniae</name>
    <dbReference type="NCBI Taxonomy" id="573"/>
    <lineage>
        <taxon>Bacteria</taxon>
        <taxon>Pseudomonadati</taxon>
        <taxon>Pseudomonadota</taxon>
        <taxon>Gammaproteobacteria</taxon>
        <taxon>Enterobacterales</taxon>
        <taxon>Enterobacteriaceae</taxon>
        <taxon>Klebsiella/Raoultella group</taxon>
        <taxon>Klebsiella</taxon>
        <taxon>Klebsiella pneumoniae complex</taxon>
    </lineage>
</organism>
<evidence type="ECO:0000250" key="1"/>
<evidence type="ECO:0000305" key="2"/>
<dbReference type="EC" id="2.4.2.17"/>
<dbReference type="EMBL" id="K01997">
    <property type="protein sequence ID" value="AAA25073.1"/>
    <property type="molecule type" value="Genomic_DNA"/>
</dbReference>
<dbReference type="SMR" id="P05148"/>
<dbReference type="UniPathway" id="UPA00031">
    <property type="reaction ID" value="UER00006"/>
</dbReference>
<dbReference type="GO" id="GO:0005737">
    <property type="term" value="C:cytoplasm"/>
    <property type="evidence" value="ECO:0007669"/>
    <property type="project" value="UniProtKB-SubCell"/>
</dbReference>
<dbReference type="GO" id="GO:0005524">
    <property type="term" value="F:ATP binding"/>
    <property type="evidence" value="ECO:0007669"/>
    <property type="project" value="UniProtKB-KW"/>
</dbReference>
<dbReference type="GO" id="GO:0003879">
    <property type="term" value="F:ATP phosphoribosyltransferase activity"/>
    <property type="evidence" value="ECO:0007669"/>
    <property type="project" value="UniProtKB-EC"/>
</dbReference>
<dbReference type="GO" id="GO:0046872">
    <property type="term" value="F:metal ion binding"/>
    <property type="evidence" value="ECO:0007669"/>
    <property type="project" value="UniProtKB-KW"/>
</dbReference>
<dbReference type="GO" id="GO:0000105">
    <property type="term" value="P:L-histidine biosynthetic process"/>
    <property type="evidence" value="ECO:0007669"/>
    <property type="project" value="UniProtKB-UniPathway"/>
</dbReference>
<dbReference type="Gene3D" id="3.40.190.10">
    <property type="entry name" value="Periplasmic binding protein-like II"/>
    <property type="match status" value="1"/>
</dbReference>
<dbReference type="InterPro" id="IPR001348">
    <property type="entry name" value="ATP_PRibTrfase_HisG"/>
</dbReference>
<dbReference type="PANTHER" id="PTHR21403:SF8">
    <property type="entry name" value="ATP PHOSPHORIBOSYLTRANSFERASE"/>
    <property type="match status" value="1"/>
</dbReference>
<dbReference type="PANTHER" id="PTHR21403">
    <property type="entry name" value="ATP PHOSPHORIBOSYLTRANSFERASE ATP-PRTASE"/>
    <property type="match status" value="1"/>
</dbReference>
<dbReference type="SUPFAM" id="SSF53850">
    <property type="entry name" value="Periplasmic binding protein-like II"/>
    <property type="match status" value="1"/>
</dbReference>
<name>HIS1_KLEPN</name>
<keyword id="KW-0028">Amino-acid biosynthesis</keyword>
<keyword id="KW-0067">ATP-binding</keyword>
<keyword id="KW-0963">Cytoplasm</keyword>
<keyword id="KW-0328">Glycosyltransferase</keyword>
<keyword id="KW-0368">Histidine biosynthesis</keyword>
<keyword id="KW-0460">Magnesium</keyword>
<keyword id="KW-0479">Metal-binding</keyword>
<keyword id="KW-0547">Nucleotide-binding</keyword>
<keyword id="KW-0808">Transferase</keyword>
<proteinExistence type="inferred from homology"/>